<reference key="1">
    <citation type="journal article" date="2008" name="PLoS ONE">
        <title>Environmental adaptation: genomic analysis of the piezotolerant and psychrotolerant deep-sea iron reducing bacterium Shewanella piezotolerans WP3.</title>
        <authorList>
            <person name="Wang F."/>
            <person name="Wang J."/>
            <person name="Jian H."/>
            <person name="Zhang B."/>
            <person name="Li S."/>
            <person name="Wang F."/>
            <person name="Zeng X."/>
            <person name="Gao L."/>
            <person name="Bartlett D.H."/>
            <person name="Yu J."/>
            <person name="Hu S."/>
            <person name="Xiao X."/>
        </authorList>
    </citation>
    <scope>NUCLEOTIDE SEQUENCE [LARGE SCALE GENOMIC DNA]</scope>
    <source>
        <strain>WP3 / JCM 13877</strain>
    </source>
</reference>
<evidence type="ECO:0000255" key="1">
    <source>
        <dbReference type="HAMAP-Rule" id="MF_01554"/>
    </source>
</evidence>
<sequence>MKQRQFFGTDGIRGKVGAGKMTPELALKLGWAAGRVLSRAGTHKVIIGKDTRISGYLFESALEAGLSAAGLDVMLIGPMPTPAVAYLTRTFRAEAGIVISASHNPYYDNGIKFFYTDGSKLEDAVELEIEAELEKPLTCVESHLLGKVGRIDDAAGRYIEYCKSHFPAEQTLSGLKIVVDCAHGATYHIAPSVFKELGAEVIAIGDKPNGLNINDKVGATSMAKICETVLEENADLGIALDGDGDRIMMVNRHGRVIDGDEILYILACDAQKRGVLQGGVVGTLMSNLGLDLALQALDIPFVRSKVGDRYVMELLKEHDWKIGGENSGHILNLDHGTTGDGIVAGILVLAAMCRQSASLEELTAGITMLPQVLVNVRFEGADDPLSSEVVLAAKAEVEQKLGARGRVLLRKSGTEPLLRVMVEGDDRADVTQFANDIADAVRNLV</sequence>
<feature type="chain" id="PRO_1000201141" description="Phosphoglucosamine mutase">
    <location>
        <begin position="1"/>
        <end position="445"/>
    </location>
</feature>
<feature type="active site" description="Phosphoserine intermediate" evidence="1">
    <location>
        <position position="102"/>
    </location>
</feature>
<feature type="binding site" description="via phosphate group" evidence="1">
    <location>
        <position position="102"/>
    </location>
    <ligand>
        <name>Mg(2+)</name>
        <dbReference type="ChEBI" id="CHEBI:18420"/>
    </ligand>
</feature>
<feature type="binding site" evidence="1">
    <location>
        <position position="241"/>
    </location>
    <ligand>
        <name>Mg(2+)</name>
        <dbReference type="ChEBI" id="CHEBI:18420"/>
    </ligand>
</feature>
<feature type="binding site" evidence="1">
    <location>
        <position position="243"/>
    </location>
    <ligand>
        <name>Mg(2+)</name>
        <dbReference type="ChEBI" id="CHEBI:18420"/>
    </ligand>
</feature>
<feature type="binding site" evidence="1">
    <location>
        <position position="245"/>
    </location>
    <ligand>
        <name>Mg(2+)</name>
        <dbReference type="ChEBI" id="CHEBI:18420"/>
    </ligand>
</feature>
<feature type="modified residue" description="Phosphoserine" evidence="1">
    <location>
        <position position="102"/>
    </location>
</feature>
<comment type="function">
    <text evidence="1">Catalyzes the conversion of glucosamine-6-phosphate to glucosamine-1-phosphate.</text>
</comment>
<comment type="catalytic activity">
    <reaction evidence="1">
        <text>alpha-D-glucosamine 1-phosphate = D-glucosamine 6-phosphate</text>
        <dbReference type="Rhea" id="RHEA:23424"/>
        <dbReference type="ChEBI" id="CHEBI:58516"/>
        <dbReference type="ChEBI" id="CHEBI:58725"/>
        <dbReference type="EC" id="5.4.2.10"/>
    </reaction>
</comment>
<comment type="cofactor">
    <cofactor evidence="1">
        <name>Mg(2+)</name>
        <dbReference type="ChEBI" id="CHEBI:18420"/>
    </cofactor>
    <text evidence="1">Binds 1 Mg(2+) ion per subunit.</text>
</comment>
<comment type="PTM">
    <text evidence="1">Activated by phosphorylation.</text>
</comment>
<comment type="similarity">
    <text evidence="1">Belongs to the phosphohexose mutase family.</text>
</comment>
<accession>B8CKG8</accession>
<organism>
    <name type="scientific">Shewanella piezotolerans (strain WP3 / JCM 13877)</name>
    <dbReference type="NCBI Taxonomy" id="225849"/>
    <lineage>
        <taxon>Bacteria</taxon>
        <taxon>Pseudomonadati</taxon>
        <taxon>Pseudomonadota</taxon>
        <taxon>Gammaproteobacteria</taxon>
        <taxon>Alteromonadales</taxon>
        <taxon>Shewanellaceae</taxon>
        <taxon>Shewanella</taxon>
    </lineage>
</organism>
<name>GLMM_SHEPW</name>
<gene>
    <name evidence="1" type="primary">glmM</name>
    <name type="ordered locus">swp_1213</name>
</gene>
<dbReference type="EC" id="5.4.2.10" evidence="1"/>
<dbReference type="EMBL" id="CP000472">
    <property type="protein sequence ID" value="ACJ28007.1"/>
    <property type="molecule type" value="Genomic_DNA"/>
</dbReference>
<dbReference type="RefSeq" id="WP_020911385.1">
    <property type="nucleotide sequence ID" value="NC_011566.1"/>
</dbReference>
<dbReference type="SMR" id="B8CKG8"/>
<dbReference type="STRING" id="225849.swp_1213"/>
<dbReference type="KEGG" id="swp:swp_1213"/>
<dbReference type="eggNOG" id="COG1109">
    <property type="taxonomic scope" value="Bacteria"/>
</dbReference>
<dbReference type="HOGENOM" id="CLU_016950_7_0_6"/>
<dbReference type="OrthoDB" id="9803322at2"/>
<dbReference type="Proteomes" id="UP000000753">
    <property type="component" value="Chromosome"/>
</dbReference>
<dbReference type="GO" id="GO:0005829">
    <property type="term" value="C:cytosol"/>
    <property type="evidence" value="ECO:0007669"/>
    <property type="project" value="TreeGrafter"/>
</dbReference>
<dbReference type="GO" id="GO:0000287">
    <property type="term" value="F:magnesium ion binding"/>
    <property type="evidence" value="ECO:0007669"/>
    <property type="project" value="UniProtKB-UniRule"/>
</dbReference>
<dbReference type="GO" id="GO:0008966">
    <property type="term" value="F:phosphoglucosamine mutase activity"/>
    <property type="evidence" value="ECO:0007669"/>
    <property type="project" value="UniProtKB-UniRule"/>
</dbReference>
<dbReference type="GO" id="GO:0004615">
    <property type="term" value="F:phosphomannomutase activity"/>
    <property type="evidence" value="ECO:0007669"/>
    <property type="project" value="TreeGrafter"/>
</dbReference>
<dbReference type="GO" id="GO:0005975">
    <property type="term" value="P:carbohydrate metabolic process"/>
    <property type="evidence" value="ECO:0007669"/>
    <property type="project" value="InterPro"/>
</dbReference>
<dbReference type="GO" id="GO:0009252">
    <property type="term" value="P:peptidoglycan biosynthetic process"/>
    <property type="evidence" value="ECO:0007669"/>
    <property type="project" value="TreeGrafter"/>
</dbReference>
<dbReference type="GO" id="GO:0006048">
    <property type="term" value="P:UDP-N-acetylglucosamine biosynthetic process"/>
    <property type="evidence" value="ECO:0007669"/>
    <property type="project" value="TreeGrafter"/>
</dbReference>
<dbReference type="CDD" id="cd05802">
    <property type="entry name" value="GlmM"/>
    <property type="match status" value="1"/>
</dbReference>
<dbReference type="FunFam" id="3.30.310.50:FF:000001">
    <property type="entry name" value="Phosphoglucosamine mutase"/>
    <property type="match status" value="1"/>
</dbReference>
<dbReference type="FunFam" id="3.40.120.10:FF:000001">
    <property type="entry name" value="Phosphoglucosamine mutase"/>
    <property type="match status" value="1"/>
</dbReference>
<dbReference type="FunFam" id="3.40.120.10:FF:000003">
    <property type="entry name" value="Phosphoglucosamine mutase"/>
    <property type="match status" value="1"/>
</dbReference>
<dbReference type="Gene3D" id="3.40.120.10">
    <property type="entry name" value="Alpha-D-Glucose-1,6-Bisphosphate, subunit A, domain 3"/>
    <property type="match status" value="3"/>
</dbReference>
<dbReference type="Gene3D" id="3.30.310.50">
    <property type="entry name" value="Alpha-D-phosphohexomutase, C-terminal domain"/>
    <property type="match status" value="1"/>
</dbReference>
<dbReference type="HAMAP" id="MF_01554_B">
    <property type="entry name" value="GlmM_B"/>
    <property type="match status" value="1"/>
</dbReference>
<dbReference type="InterPro" id="IPR005844">
    <property type="entry name" value="A-D-PHexomutase_a/b/a-I"/>
</dbReference>
<dbReference type="InterPro" id="IPR016055">
    <property type="entry name" value="A-D-PHexomutase_a/b/a-I/II/III"/>
</dbReference>
<dbReference type="InterPro" id="IPR005845">
    <property type="entry name" value="A-D-PHexomutase_a/b/a-II"/>
</dbReference>
<dbReference type="InterPro" id="IPR005846">
    <property type="entry name" value="A-D-PHexomutase_a/b/a-III"/>
</dbReference>
<dbReference type="InterPro" id="IPR005843">
    <property type="entry name" value="A-D-PHexomutase_C"/>
</dbReference>
<dbReference type="InterPro" id="IPR036900">
    <property type="entry name" value="A-D-PHexomutase_C_sf"/>
</dbReference>
<dbReference type="InterPro" id="IPR016066">
    <property type="entry name" value="A-D-PHexomutase_CS"/>
</dbReference>
<dbReference type="InterPro" id="IPR005841">
    <property type="entry name" value="Alpha-D-phosphohexomutase_SF"/>
</dbReference>
<dbReference type="InterPro" id="IPR006352">
    <property type="entry name" value="GlmM_bact"/>
</dbReference>
<dbReference type="InterPro" id="IPR050060">
    <property type="entry name" value="Phosphoglucosamine_mutase"/>
</dbReference>
<dbReference type="NCBIfam" id="TIGR01455">
    <property type="entry name" value="glmM"/>
    <property type="match status" value="1"/>
</dbReference>
<dbReference type="NCBIfam" id="NF008139">
    <property type="entry name" value="PRK10887.1"/>
    <property type="match status" value="1"/>
</dbReference>
<dbReference type="PANTHER" id="PTHR42946:SF1">
    <property type="entry name" value="PHOSPHOGLUCOMUTASE (ALPHA-D-GLUCOSE-1,6-BISPHOSPHATE-DEPENDENT)"/>
    <property type="match status" value="1"/>
</dbReference>
<dbReference type="PANTHER" id="PTHR42946">
    <property type="entry name" value="PHOSPHOHEXOSE MUTASE"/>
    <property type="match status" value="1"/>
</dbReference>
<dbReference type="Pfam" id="PF02878">
    <property type="entry name" value="PGM_PMM_I"/>
    <property type="match status" value="1"/>
</dbReference>
<dbReference type="Pfam" id="PF02879">
    <property type="entry name" value="PGM_PMM_II"/>
    <property type="match status" value="1"/>
</dbReference>
<dbReference type="Pfam" id="PF02880">
    <property type="entry name" value="PGM_PMM_III"/>
    <property type="match status" value="1"/>
</dbReference>
<dbReference type="Pfam" id="PF00408">
    <property type="entry name" value="PGM_PMM_IV"/>
    <property type="match status" value="1"/>
</dbReference>
<dbReference type="PRINTS" id="PR00509">
    <property type="entry name" value="PGMPMM"/>
</dbReference>
<dbReference type="SUPFAM" id="SSF55957">
    <property type="entry name" value="Phosphoglucomutase, C-terminal domain"/>
    <property type="match status" value="1"/>
</dbReference>
<dbReference type="SUPFAM" id="SSF53738">
    <property type="entry name" value="Phosphoglucomutase, first 3 domains"/>
    <property type="match status" value="3"/>
</dbReference>
<dbReference type="PROSITE" id="PS00710">
    <property type="entry name" value="PGM_PMM"/>
    <property type="match status" value="1"/>
</dbReference>
<keyword id="KW-0413">Isomerase</keyword>
<keyword id="KW-0460">Magnesium</keyword>
<keyword id="KW-0479">Metal-binding</keyword>
<keyword id="KW-0597">Phosphoprotein</keyword>
<proteinExistence type="inferred from homology"/>
<protein>
    <recommendedName>
        <fullName evidence="1">Phosphoglucosamine mutase</fullName>
        <ecNumber evidence="1">5.4.2.10</ecNumber>
    </recommendedName>
</protein>